<reference key="1">
    <citation type="submission" date="2007-10" db="EMBL/GenBank/DDBJ databases">
        <title>Complete sequence of Salinispora arenicola CNS-205.</title>
        <authorList>
            <consortium name="US DOE Joint Genome Institute"/>
            <person name="Copeland A."/>
            <person name="Lucas S."/>
            <person name="Lapidus A."/>
            <person name="Barry K."/>
            <person name="Glavina del Rio T."/>
            <person name="Dalin E."/>
            <person name="Tice H."/>
            <person name="Pitluck S."/>
            <person name="Foster B."/>
            <person name="Schmutz J."/>
            <person name="Larimer F."/>
            <person name="Land M."/>
            <person name="Hauser L."/>
            <person name="Kyrpides N."/>
            <person name="Ivanova N."/>
            <person name="Jensen P.R."/>
            <person name="Moore B.S."/>
            <person name="Penn K."/>
            <person name="Jenkins C."/>
            <person name="Udwary D."/>
            <person name="Xiang L."/>
            <person name="Gontang E."/>
            <person name="Richardson P."/>
        </authorList>
    </citation>
    <scope>NUCLEOTIDE SEQUENCE [LARGE SCALE GENOMIC DNA]</scope>
    <source>
        <strain>CNS-205</strain>
    </source>
</reference>
<comment type="function">
    <text evidence="1">Catalyzes the phosphorylation of the position 2 hydroxy group of 4-diphosphocytidyl-2C-methyl-D-erythritol.</text>
</comment>
<comment type="catalytic activity">
    <reaction evidence="1">
        <text>4-CDP-2-C-methyl-D-erythritol + ATP = 4-CDP-2-C-methyl-D-erythritol 2-phosphate + ADP + H(+)</text>
        <dbReference type="Rhea" id="RHEA:18437"/>
        <dbReference type="ChEBI" id="CHEBI:15378"/>
        <dbReference type="ChEBI" id="CHEBI:30616"/>
        <dbReference type="ChEBI" id="CHEBI:57823"/>
        <dbReference type="ChEBI" id="CHEBI:57919"/>
        <dbReference type="ChEBI" id="CHEBI:456216"/>
        <dbReference type="EC" id="2.7.1.148"/>
    </reaction>
</comment>
<comment type="pathway">
    <text evidence="1">Isoprenoid biosynthesis; isopentenyl diphosphate biosynthesis via DXP pathway; isopentenyl diphosphate from 1-deoxy-D-xylulose 5-phosphate: step 3/6.</text>
</comment>
<comment type="similarity">
    <text evidence="1">Belongs to the GHMP kinase family. IspE subfamily.</text>
</comment>
<gene>
    <name evidence="1" type="primary">ispE</name>
    <name type="ordered locus">Sare_0727</name>
</gene>
<dbReference type="EC" id="2.7.1.148" evidence="1"/>
<dbReference type="EMBL" id="CP000850">
    <property type="protein sequence ID" value="ABV96646.1"/>
    <property type="molecule type" value="Genomic_DNA"/>
</dbReference>
<dbReference type="SMR" id="A8M223"/>
<dbReference type="STRING" id="391037.Sare_0727"/>
<dbReference type="KEGG" id="saq:Sare_0727"/>
<dbReference type="PATRIC" id="fig|391037.6.peg.742"/>
<dbReference type="eggNOG" id="COG1947">
    <property type="taxonomic scope" value="Bacteria"/>
</dbReference>
<dbReference type="HOGENOM" id="CLU_053057_1_1_11"/>
<dbReference type="OrthoDB" id="3173073at2"/>
<dbReference type="UniPathway" id="UPA00056">
    <property type="reaction ID" value="UER00094"/>
</dbReference>
<dbReference type="GO" id="GO:0050515">
    <property type="term" value="F:4-(cytidine 5'-diphospho)-2-C-methyl-D-erythritol kinase activity"/>
    <property type="evidence" value="ECO:0007669"/>
    <property type="project" value="UniProtKB-UniRule"/>
</dbReference>
<dbReference type="GO" id="GO:0005524">
    <property type="term" value="F:ATP binding"/>
    <property type="evidence" value="ECO:0007669"/>
    <property type="project" value="UniProtKB-UniRule"/>
</dbReference>
<dbReference type="GO" id="GO:0019288">
    <property type="term" value="P:isopentenyl diphosphate biosynthetic process, methylerythritol 4-phosphate pathway"/>
    <property type="evidence" value="ECO:0007669"/>
    <property type="project" value="UniProtKB-UniRule"/>
</dbReference>
<dbReference type="GO" id="GO:0016114">
    <property type="term" value="P:terpenoid biosynthetic process"/>
    <property type="evidence" value="ECO:0007669"/>
    <property type="project" value="InterPro"/>
</dbReference>
<dbReference type="Gene3D" id="3.30.230.10">
    <property type="match status" value="1"/>
</dbReference>
<dbReference type="Gene3D" id="3.30.70.890">
    <property type="entry name" value="GHMP kinase, C-terminal domain"/>
    <property type="match status" value="1"/>
</dbReference>
<dbReference type="HAMAP" id="MF_00061">
    <property type="entry name" value="IspE"/>
    <property type="match status" value="1"/>
</dbReference>
<dbReference type="InterPro" id="IPR013750">
    <property type="entry name" value="GHMP_kinase_C_dom"/>
</dbReference>
<dbReference type="InterPro" id="IPR036554">
    <property type="entry name" value="GHMP_kinase_C_sf"/>
</dbReference>
<dbReference type="InterPro" id="IPR006204">
    <property type="entry name" value="GHMP_kinase_N_dom"/>
</dbReference>
<dbReference type="InterPro" id="IPR004424">
    <property type="entry name" value="IspE"/>
</dbReference>
<dbReference type="InterPro" id="IPR020568">
    <property type="entry name" value="Ribosomal_Su5_D2-typ_SF"/>
</dbReference>
<dbReference type="InterPro" id="IPR014721">
    <property type="entry name" value="Ribsml_uS5_D2-typ_fold_subgr"/>
</dbReference>
<dbReference type="NCBIfam" id="TIGR00154">
    <property type="entry name" value="ispE"/>
    <property type="match status" value="1"/>
</dbReference>
<dbReference type="NCBIfam" id="NF002870">
    <property type="entry name" value="PRK03188.1"/>
    <property type="match status" value="1"/>
</dbReference>
<dbReference type="PANTHER" id="PTHR43527">
    <property type="entry name" value="4-DIPHOSPHOCYTIDYL-2-C-METHYL-D-ERYTHRITOL KINASE, CHLOROPLASTIC"/>
    <property type="match status" value="1"/>
</dbReference>
<dbReference type="PANTHER" id="PTHR43527:SF2">
    <property type="entry name" value="4-DIPHOSPHOCYTIDYL-2-C-METHYL-D-ERYTHRITOL KINASE, CHLOROPLASTIC"/>
    <property type="match status" value="1"/>
</dbReference>
<dbReference type="Pfam" id="PF08544">
    <property type="entry name" value="GHMP_kinases_C"/>
    <property type="match status" value="1"/>
</dbReference>
<dbReference type="Pfam" id="PF00288">
    <property type="entry name" value="GHMP_kinases_N"/>
    <property type="match status" value="1"/>
</dbReference>
<dbReference type="PIRSF" id="PIRSF010376">
    <property type="entry name" value="IspE"/>
    <property type="match status" value="1"/>
</dbReference>
<dbReference type="SUPFAM" id="SSF55060">
    <property type="entry name" value="GHMP Kinase, C-terminal domain"/>
    <property type="match status" value="1"/>
</dbReference>
<dbReference type="SUPFAM" id="SSF54211">
    <property type="entry name" value="Ribosomal protein S5 domain 2-like"/>
    <property type="match status" value="1"/>
</dbReference>
<protein>
    <recommendedName>
        <fullName evidence="1">4-diphosphocytidyl-2-C-methyl-D-erythritol kinase</fullName>
        <shortName evidence="1">CMK</shortName>
        <ecNumber evidence="1">2.7.1.148</ecNumber>
    </recommendedName>
    <alternativeName>
        <fullName evidence="1">4-(cytidine-5'-diphospho)-2-C-methyl-D-erythritol kinase</fullName>
    </alternativeName>
</protein>
<evidence type="ECO:0000255" key="1">
    <source>
        <dbReference type="HAMAP-Rule" id="MF_00061"/>
    </source>
</evidence>
<name>ISPE_SALAI</name>
<keyword id="KW-0067">ATP-binding</keyword>
<keyword id="KW-0414">Isoprene biosynthesis</keyword>
<keyword id="KW-0418">Kinase</keyword>
<keyword id="KW-0547">Nucleotide-binding</keyword>
<keyword id="KW-0808">Transferase</keyword>
<accession>A8M223</accession>
<proteinExistence type="inferred from homology"/>
<sequence>MTEAWRPDGDEPRGVSGPFRVRVPAKINLHLGVGPLRPDGYHELNTVYHAISIHDELTARRGDTLALTMEGEGAGELALDDSNLVIRAARALAAHAGVPPYARLHLRKQIPLAGGLAGGSADAAAALVACDALWGTGLSRDELAGIAADLGSDVPFLIHGGTALGTGRGEAVSPVLARPTVWHWVVAVADGGLSTPVAYRELDRLRDAGAASTPLGSSDALLAALRQRDPRVLAGVLGNDLQDAALALRPSLAATLKAGEAAGALAGIVSGSGPTCVFLAANAADAERVAGELSALDVCRQARTARGPVAGARVG</sequence>
<organism>
    <name type="scientific">Salinispora arenicola (strain CNS-205)</name>
    <dbReference type="NCBI Taxonomy" id="391037"/>
    <lineage>
        <taxon>Bacteria</taxon>
        <taxon>Bacillati</taxon>
        <taxon>Actinomycetota</taxon>
        <taxon>Actinomycetes</taxon>
        <taxon>Micromonosporales</taxon>
        <taxon>Micromonosporaceae</taxon>
        <taxon>Salinispora</taxon>
    </lineage>
</organism>
<feature type="chain" id="PRO_0000335753" description="4-diphosphocytidyl-2-C-methyl-D-erythritol kinase">
    <location>
        <begin position="1"/>
        <end position="315"/>
    </location>
</feature>
<feature type="active site" evidence="1">
    <location>
        <position position="26"/>
    </location>
</feature>
<feature type="active site" evidence="1">
    <location>
        <position position="153"/>
    </location>
</feature>
<feature type="binding site" evidence="1">
    <location>
        <begin position="111"/>
        <end position="121"/>
    </location>
    <ligand>
        <name>ATP</name>
        <dbReference type="ChEBI" id="CHEBI:30616"/>
    </ligand>
</feature>